<accession>P9WHB6</accession>
<accession>L0T697</accession>
<accession>P60627</accession>
<accession>P95063</accession>
<gene>
    <name evidence="1" type="primary">rplX</name>
    <name type="ordered locus">MT0741.1</name>
</gene>
<name>RL24_MYCTO</name>
<reference key="1">
    <citation type="journal article" date="2002" name="J. Bacteriol.">
        <title>Whole-genome comparison of Mycobacterium tuberculosis clinical and laboratory strains.</title>
        <authorList>
            <person name="Fleischmann R.D."/>
            <person name="Alland D."/>
            <person name="Eisen J.A."/>
            <person name="Carpenter L."/>
            <person name="White O."/>
            <person name="Peterson J.D."/>
            <person name="DeBoy R.T."/>
            <person name="Dodson R.J."/>
            <person name="Gwinn M.L."/>
            <person name="Haft D.H."/>
            <person name="Hickey E.K."/>
            <person name="Kolonay J.F."/>
            <person name="Nelson W.C."/>
            <person name="Umayam L.A."/>
            <person name="Ermolaeva M.D."/>
            <person name="Salzberg S.L."/>
            <person name="Delcher A."/>
            <person name="Utterback T.R."/>
            <person name="Weidman J.F."/>
            <person name="Khouri H.M."/>
            <person name="Gill J."/>
            <person name="Mikula A."/>
            <person name="Bishai W."/>
            <person name="Jacobs W.R. Jr."/>
            <person name="Venter J.C."/>
            <person name="Fraser C.M."/>
        </authorList>
    </citation>
    <scope>NUCLEOTIDE SEQUENCE [LARGE SCALE GENOMIC DNA]</scope>
    <source>
        <strain>CDC 1551 / Oshkosh</strain>
    </source>
</reference>
<keyword id="KW-1185">Reference proteome</keyword>
<keyword id="KW-0687">Ribonucleoprotein</keyword>
<keyword id="KW-0689">Ribosomal protein</keyword>
<keyword id="KW-0694">RNA-binding</keyword>
<keyword id="KW-0699">rRNA-binding</keyword>
<dbReference type="EMBL" id="AE000516">
    <property type="protein sequence ID" value="AAK44974.1"/>
    <property type="molecule type" value="Genomic_DNA"/>
</dbReference>
<dbReference type="PIR" id="F70643">
    <property type="entry name" value="F70643"/>
</dbReference>
<dbReference type="RefSeq" id="WP_003403654.1">
    <property type="nucleotide sequence ID" value="NZ_KK341227.1"/>
</dbReference>
<dbReference type="SMR" id="P9WHB6"/>
<dbReference type="GeneID" id="45424680"/>
<dbReference type="KEGG" id="mtc:MT0741.1"/>
<dbReference type="PATRIC" id="fig|83331.31.peg.793"/>
<dbReference type="HOGENOM" id="CLU_093315_2_0_11"/>
<dbReference type="Proteomes" id="UP000001020">
    <property type="component" value="Chromosome"/>
</dbReference>
<dbReference type="GO" id="GO:1990904">
    <property type="term" value="C:ribonucleoprotein complex"/>
    <property type="evidence" value="ECO:0007669"/>
    <property type="project" value="UniProtKB-KW"/>
</dbReference>
<dbReference type="GO" id="GO:0005840">
    <property type="term" value="C:ribosome"/>
    <property type="evidence" value="ECO:0007669"/>
    <property type="project" value="UniProtKB-KW"/>
</dbReference>
<dbReference type="GO" id="GO:0019843">
    <property type="term" value="F:rRNA binding"/>
    <property type="evidence" value="ECO:0007669"/>
    <property type="project" value="UniProtKB-UniRule"/>
</dbReference>
<dbReference type="GO" id="GO:0003735">
    <property type="term" value="F:structural constituent of ribosome"/>
    <property type="evidence" value="ECO:0007669"/>
    <property type="project" value="InterPro"/>
</dbReference>
<dbReference type="GO" id="GO:0006412">
    <property type="term" value="P:translation"/>
    <property type="evidence" value="ECO:0007669"/>
    <property type="project" value="UniProtKB-UniRule"/>
</dbReference>
<dbReference type="CDD" id="cd06089">
    <property type="entry name" value="KOW_RPL26"/>
    <property type="match status" value="1"/>
</dbReference>
<dbReference type="FunFam" id="2.30.30.30:FF:000004">
    <property type="entry name" value="50S ribosomal protein L24"/>
    <property type="match status" value="1"/>
</dbReference>
<dbReference type="Gene3D" id="2.30.30.30">
    <property type="match status" value="1"/>
</dbReference>
<dbReference type="HAMAP" id="MF_01326_B">
    <property type="entry name" value="Ribosomal_uL24_B"/>
    <property type="match status" value="1"/>
</dbReference>
<dbReference type="InterPro" id="IPR005824">
    <property type="entry name" value="KOW"/>
</dbReference>
<dbReference type="InterPro" id="IPR014722">
    <property type="entry name" value="Rib_uL2_dom2"/>
</dbReference>
<dbReference type="InterPro" id="IPR003256">
    <property type="entry name" value="Ribosomal_uL24"/>
</dbReference>
<dbReference type="InterPro" id="IPR005825">
    <property type="entry name" value="Ribosomal_uL24_CS"/>
</dbReference>
<dbReference type="InterPro" id="IPR041988">
    <property type="entry name" value="Ribosomal_uL24_KOW"/>
</dbReference>
<dbReference type="InterPro" id="IPR008991">
    <property type="entry name" value="Translation_prot_SH3-like_sf"/>
</dbReference>
<dbReference type="NCBIfam" id="TIGR01079">
    <property type="entry name" value="rplX_bact"/>
    <property type="match status" value="1"/>
</dbReference>
<dbReference type="PANTHER" id="PTHR12903">
    <property type="entry name" value="MITOCHONDRIAL RIBOSOMAL PROTEIN L24"/>
    <property type="match status" value="1"/>
</dbReference>
<dbReference type="Pfam" id="PF00467">
    <property type="entry name" value="KOW"/>
    <property type="match status" value="1"/>
</dbReference>
<dbReference type="Pfam" id="PF17136">
    <property type="entry name" value="ribosomal_L24"/>
    <property type="match status" value="1"/>
</dbReference>
<dbReference type="SMART" id="SM00739">
    <property type="entry name" value="KOW"/>
    <property type="match status" value="1"/>
</dbReference>
<dbReference type="SUPFAM" id="SSF50104">
    <property type="entry name" value="Translation proteins SH3-like domain"/>
    <property type="match status" value="1"/>
</dbReference>
<dbReference type="PROSITE" id="PS01108">
    <property type="entry name" value="RIBOSOMAL_L24"/>
    <property type="match status" value="1"/>
</dbReference>
<protein>
    <recommendedName>
        <fullName evidence="1">Large ribosomal subunit protein uL24</fullName>
    </recommendedName>
    <alternativeName>
        <fullName evidence="2">50S ribosomal protein L24</fullName>
    </alternativeName>
</protein>
<organism>
    <name type="scientific">Mycobacterium tuberculosis (strain CDC 1551 / Oshkosh)</name>
    <dbReference type="NCBI Taxonomy" id="83331"/>
    <lineage>
        <taxon>Bacteria</taxon>
        <taxon>Bacillati</taxon>
        <taxon>Actinomycetota</taxon>
        <taxon>Actinomycetes</taxon>
        <taxon>Mycobacteriales</taxon>
        <taxon>Mycobacteriaceae</taxon>
        <taxon>Mycobacterium</taxon>
        <taxon>Mycobacterium tuberculosis complex</taxon>
    </lineage>
</organism>
<evidence type="ECO:0000255" key="1">
    <source>
        <dbReference type="HAMAP-Rule" id="MF_01326"/>
    </source>
</evidence>
<evidence type="ECO:0000305" key="2"/>
<sequence length="105" mass="11475">MKVHKGDTVLVISGKDKGAKGKVLQAYPDRNRVLVEGVNRIKKHTAISTTQRGARSGGIVTQEAPIHVSNVMVVDSDGKPTRIGYRVDEETGKRVRISKRNGKDI</sequence>
<comment type="function">
    <text evidence="1">One of two assembly initiator proteins, it binds directly to the 5'-end of the 23S rRNA, where it nucleates assembly of the 50S subunit.</text>
</comment>
<comment type="function">
    <text evidence="1">One of the proteins that surrounds the polypeptide exit tunnel on the outside of the subunit.</text>
</comment>
<comment type="subunit">
    <text evidence="1">Part of the 50S ribosomal subunit.</text>
</comment>
<comment type="similarity">
    <text evidence="1">Belongs to the universal ribosomal protein uL24 family.</text>
</comment>
<proteinExistence type="inferred from homology"/>
<feature type="chain" id="PRO_0000428215" description="Large ribosomal subunit protein uL24">
    <location>
        <begin position="1"/>
        <end position="105"/>
    </location>
</feature>